<accession>Q68XE8</accession>
<comment type="function">
    <text evidence="1">Catalyzes the attachment of threonine to tRNA(Thr) in a two-step reaction: L-threonine is first activated by ATP to form Thr-AMP and then transferred to the acceptor end of tRNA(Thr). Also edits incorrectly charged L-seryl-tRNA(Thr).</text>
</comment>
<comment type="catalytic activity">
    <reaction evidence="1">
        <text>tRNA(Thr) + L-threonine + ATP = L-threonyl-tRNA(Thr) + AMP + diphosphate + H(+)</text>
        <dbReference type="Rhea" id="RHEA:24624"/>
        <dbReference type="Rhea" id="RHEA-COMP:9670"/>
        <dbReference type="Rhea" id="RHEA-COMP:9704"/>
        <dbReference type="ChEBI" id="CHEBI:15378"/>
        <dbReference type="ChEBI" id="CHEBI:30616"/>
        <dbReference type="ChEBI" id="CHEBI:33019"/>
        <dbReference type="ChEBI" id="CHEBI:57926"/>
        <dbReference type="ChEBI" id="CHEBI:78442"/>
        <dbReference type="ChEBI" id="CHEBI:78534"/>
        <dbReference type="ChEBI" id="CHEBI:456215"/>
        <dbReference type="EC" id="6.1.1.3"/>
    </reaction>
</comment>
<comment type="cofactor">
    <cofactor evidence="1">
        <name>Zn(2+)</name>
        <dbReference type="ChEBI" id="CHEBI:29105"/>
    </cofactor>
    <text evidence="1">Binds 1 zinc ion per subunit.</text>
</comment>
<comment type="subunit">
    <text evidence="1">Homodimer.</text>
</comment>
<comment type="subcellular location">
    <subcellularLocation>
        <location evidence="1">Cytoplasm</location>
    </subcellularLocation>
</comment>
<comment type="similarity">
    <text evidence="1">Belongs to the class-II aminoacyl-tRNA synthetase family.</text>
</comment>
<reference key="1">
    <citation type="journal article" date="2004" name="J. Bacteriol.">
        <title>Complete genome sequence of Rickettsia typhi and comparison with sequences of other Rickettsiae.</title>
        <authorList>
            <person name="McLeod M.P."/>
            <person name="Qin X."/>
            <person name="Karpathy S.E."/>
            <person name="Gioia J."/>
            <person name="Highlander S.K."/>
            <person name="Fox G.E."/>
            <person name="McNeill T.Z."/>
            <person name="Jiang H."/>
            <person name="Muzny D."/>
            <person name="Jacob L.S."/>
            <person name="Hawes A.C."/>
            <person name="Sodergren E."/>
            <person name="Gill R."/>
            <person name="Hume J."/>
            <person name="Morgan M."/>
            <person name="Fan G."/>
            <person name="Amin A.G."/>
            <person name="Gibbs R.A."/>
            <person name="Hong C."/>
            <person name="Yu X.-J."/>
            <person name="Walker D.H."/>
            <person name="Weinstock G.M."/>
        </authorList>
    </citation>
    <scope>NUCLEOTIDE SEQUENCE [LARGE SCALE GENOMIC DNA]</scope>
    <source>
        <strain>ATCC VR-144 / Wilmington</strain>
    </source>
</reference>
<feature type="chain" id="PRO_0000101039" description="Threonine--tRNA ligase">
    <location>
        <begin position="1"/>
        <end position="635"/>
    </location>
</feature>
<feature type="domain" description="TGS" evidence="2">
    <location>
        <begin position="1"/>
        <end position="61"/>
    </location>
</feature>
<feature type="region of interest" description="Catalytic" evidence="1">
    <location>
        <begin position="242"/>
        <end position="533"/>
    </location>
</feature>
<feature type="binding site" evidence="1">
    <location>
        <position position="333"/>
    </location>
    <ligand>
        <name>Zn(2+)</name>
        <dbReference type="ChEBI" id="CHEBI:29105"/>
    </ligand>
</feature>
<feature type="binding site" evidence="1">
    <location>
        <position position="384"/>
    </location>
    <ligand>
        <name>Zn(2+)</name>
        <dbReference type="ChEBI" id="CHEBI:29105"/>
    </ligand>
</feature>
<feature type="binding site" evidence="1">
    <location>
        <position position="510"/>
    </location>
    <ligand>
        <name>Zn(2+)</name>
        <dbReference type="ChEBI" id="CHEBI:29105"/>
    </ligand>
</feature>
<proteinExistence type="inferred from homology"/>
<sequence length="635" mass="72799">MINISFPDGSVKQFAQNITAFEIANAISMSLAKAAMVVEINGEFKDLSTVIEHDCKLRILTAKDYECLEIIRHDAAHLTAAAVKELFPETQVAIGPAIENGYYYDFARDKPFSRDDLATIEAKMQELVKKNEKITRELWDRDKAIEFFLSIGEHYKAKIIASIPAGEQITLYRQGNFIDLCRGPHAPSTGFVKYFKLMKVAGAYWRGNSRNEMLQRIYGTAWATKEQLDNYLFMLEEAEKRDHRKIGKELDLFHFQEEAQGMVFWHDKGWSIYNTIEQYIRKKNRKNGYIEVKTPVLVDKSLWEASGHWAKFRCDMFTLETDDKILALKPMNCPCHVQIFKQGIKSYRDLPLRMSEFGLCHRNEASGALHGLMRVRSLVQDDAHIFCAEEQITDETVRFCKLLTEVYKDFGFTDIKVKFSDRPEIRAGNDEVWDKAEHALKTAVEKVGFIYTLNPGDGAFYGPKLEFVLTDAIGRQWQCGTLQMDFVLPERLDANYIAASGEKKRPVMLHRAILGSLERFIGILIEEYAGKFPIWLAPVQVAIATITNDLNDYALEVQKTLIDNNIRTDINISPDKINYKIREFSNQKIPMIAVIGKKEQANKQVTIRKFGTTGQEILSIEQLIAMIKKENSNYL</sequence>
<name>SYT_RICTY</name>
<protein>
    <recommendedName>
        <fullName evidence="1">Threonine--tRNA ligase</fullName>
        <ecNumber evidence="1">6.1.1.3</ecNumber>
    </recommendedName>
    <alternativeName>
        <fullName evidence="1">Threonyl-tRNA synthetase</fullName>
        <shortName evidence="1">ThrRS</shortName>
    </alternativeName>
</protein>
<evidence type="ECO:0000255" key="1">
    <source>
        <dbReference type="HAMAP-Rule" id="MF_00184"/>
    </source>
</evidence>
<evidence type="ECO:0000255" key="2">
    <source>
        <dbReference type="PROSITE-ProRule" id="PRU01228"/>
    </source>
</evidence>
<gene>
    <name evidence="1" type="primary">thrS</name>
    <name type="ordered locus">RT0212</name>
</gene>
<dbReference type="EC" id="6.1.1.3" evidence="1"/>
<dbReference type="EMBL" id="AE017197">
    <property type="protein sequence ID" value="AAU03694.1"/>
    <property type="molecule type" value="Genomic_DNA"/>
</dbReference>
<dbReference type="RefSeq" id="WP_011190680.1">
    <property type="nucleotide sequence ID" value="NC_006142.1"/>
</dbReference>
<dbReference type="SMR" id="Q68XE8"/>
<dbReference type="KEGG" id="rty:RT0212"/>
<dbReference type="eggNOG" id="COG0441">
    <property type="taxonomic scope" value="Bacteria"/>
</dbReference>
<dbReference type="HOGENOM" id="CLU_008554_0_1_5"/>
<dbReference type="OrthoDB" id="9802304at2"/>
<dbReference type="Proteomes" id="UP000000604">
    <property type="component" value="Chromosome"/>
</dbReference>
<dbReference type="GO" id="GO:0005737">
    <property type="term" value="C:cytoplasm"/>
    <property type="evidence" value="ECO:0007669"/>
    <property type="project" value="UniProtKB-SubCell"/>
</dbReference>
<dbReference type="GO" id="GO:0005524">
    <property type="term" value="F:ATP binding"/>
    <property type="evidence" value="ECO:0007669"/>
    <property type="project" value="UniProtKB-UniRule"/>
</dbReference>
<dbReference type="GO" id="GO:0046872">
    <property type="term" value="F:metal ion binding"/>
    <property type="evidence" value="ECO:0007669"/>
    <property type="project" value="UniProtKB-KW"/>
</dbReference>
<dbReference type="GO" id="GO:0004829">
    <property type="term" value="F:threonine-tRNA ligase activity"/>
    <property type="evidence" value="ECO:0007669"/>
    <property type="project" value="UniProtKB-UniRule"/>
</dbReference>
<dbReference type="GO" id="GO:0000049">
    <property type="term" value="F:tRNA binding"/>
    <property type="evidence" value="ECO:0007669"/>
    <property type="project" value="UniProtKB-KW"/>
</dbReference>
<dbReference type="GO" id="GO:0006435">
    <property type="term" value="P:threonyl-tRNA aminoacylation"/>
    <property type="evidence" value="ECO:0007669"/>
    <property type="project" value="UniProtKB-UniRule"/>
</dbReference>
<dbReference type="CDD" id="cd01667">
    <property type="entry name" value="TGS_ThrRS"/>
    <property type="match status" value="1"/>
</dbReference>
<dbReference type="CDD" id="cd00860">
    <property type="entry name" value="ThrRS_anticodon"/>
    <property type="match status" value="1"/>
</dbReference>
<dbReference type="CDD" id="cd00771">
    <property type="entry name" value="ThrRS_core"/>
    <property type="match status" value="1"/>
</dbReference>
<dbReference type="FunFam" id="3.10.20.30:FF:000005">
    <property type="entry name" value="Threonine--tRNA ligase"/>
    <property type="match status" value="1"/>
</dbReference>
<dbReference type="FunFam" id="3.30.54.20:FF:000002">
    <property type="entry name" value="Threonine--tRNA ligase"/>
    <property type="match status" value="1"/>
</dbReference>
<dbReference type="FunFam" id="3.30.930.10:FF:000002">
    <property type="entry name" value="Threonine--tRNA ligase"/>
    <property type="match status" value="1"/>
</dbReference>
<dbReference type="FunFam" id="3.40.50.800:FF:000001">
    <property type="entry name" value="Threonine--tRNA ligase"/>
    <property type="match status" value="1"/>
</dbReference>
<dbReference type="FunFam" id="3.30.980.10:FF:000005">
    <property type="entry name" value="Threonyl-tRNA synthetase, mitochondrial"/>
    <property type="match status" value="1"/>
</dbReference>
<dbReference type="Gene3D" id="3.10.20.30">
    <property type="match status" value="1"/>
</dbReference>
<dbReference type="Gene3D" id="3.30.54.20">
    <property type="match status" value="1"/>
</dbReference>
<dbReference type="Gene3D" id="3.40.50.800">
    <property type="entry name" value="Anticodon-binding domain"/>
    <property type="match status" value="1"/>
</dbReference>
<dbReference type="Gene3D" id="3.30.930.10">
    <property type="entry name" value="Bira Bifunctional Protein, Domain 2"/>
    <property type="match status" value="1"/>
</dbReference>
<dbReference type="Gene3D" id="3.30.980.10">
    <property type="entry name" value="Threonyl-trna Synthetase, Chain A, domain 2"/>
    <property type="match status" value="1"/>
</dbReference>
<dbReference type="HAMAP" id="MF_00184">
    <property type="entry name" value="Thr_tRNA_synth"/>
    <property type="match status" value="1"/>
</dbReference>
<dbReference type="InterPro" id="IPR002314">
    <property type="entry name" value="aa-tRNA-synt_IIb"/>
</dbReference>
<dbReference type="InterPro" id="IPR006195">
    <property type="entry name" value="aa-tRNA-synth_II"/>
</dbReference>
<dbReference type="InterPro" id="IPR045864">
    <property type="entry name" value="aa-tRNA-synth_II/BPL/LPL"/>
</dbReference>
<dbReference type="InterPro" id="IPR004154">
    <property type="entry name" value="Anticodon-bd"/>
</dbReference>
<dbReference type="InterPro" id="IPR036621">
    <property type="entry name" value="Anticodon-bd_dom_sf"/>
</dbReference>
<dbReference type="InterPro" id="IPR012675">
    <property type="entry name" value="Beta-grasp_dom_sf"/>
</dbReference>
<dbReference type="InterPro" id="IPR004095">
    <property type="entry name" value="TGS"/>
</dbReference>
<dbReference type="InterPro" id="IPR012676">
    <property type="entry name" value="TGS-like"/>
</dbReference>
<dbReference type="InterPro" id="IPR002320">
    <property type="entry name" value="Thr-tRNA-ligase_IIa"/>
</dbReference>
<dbReference type="InterPro" id="IPR018163">
    <property type="entry name" value="Thr/Ala-tRNA-synth_IIc_edit"/>
</dbReference>
<dbReference type="InterPro" id="IPR047246">
    <property type="entry name" value="ThrRS_anticodon"/>
</dbReference>
<dbReference type="InterPro" id="IPR033728">
    <property type="entry name" value="ThrRS_core"/>
</dbReference>
<dbReference type="InterPro" id="IPR012947">
    <property type="entry name" value="tRNA_SAD"/>
</dbReference>
<dbReference type="NCBIfam" id="TIGR00418">
    <property type="entry name" value="thrS"/>
    <property type="match status" value="1"/>
</dbReference>
<dbReference type="PANTHER" id="PTHR11451:SF44">
    <property type="entry name" value="THREONINE--TRNA LIGASE, CHLOROPLASTIC_MITOCHONDRIAL 2"/>
    <property type="match status" value="1"/>
</dbReference>
<dbReference type="PANTHER" id="PTHR11451">
    <property type="entry name" value="THREONINE-TRNA LIGASE"/>
    <property type="match status" value="1"/>
</dbReference>
<dbReference type="Pfam" id="PF03129">
    <property type="entry name" value="HGTP_anticodon"/>
    <property type="match status" value="1"/>
</dbReference>
<dbReference type="Pfam" id="PF02824">
    <property type="entry name" value="TGS"/>
    <property type="match status" value="1"/>
</dbReference>
<dbReference type="Pfam" id="PF00587">
    <property type="entry name" value="tRNA-synt_2b"/>
    <property type="match status" value="1"/>
</dbReference>
<dbReference type="Pfam" id="PF07973">
    <property type="entry name" value="tRNA_SAD"/>
    <property type="match status" value="1"/>
</dbReference>
<dbReference type="PRINTS" id="PR01047">
    <property type="entry name" value="TRNASYNTHTHR"/>
</dbReference>
<dbReference type="SMART" id="SM00863">
    <property type="entry name" value="tRNA_SAD"/>
    <property type="match status" value="1"/>
</dbReference>
<dbReference type="SUPFAM" id="SSF52954">
    <property type="entry name" value="Class II aaRS ABD-related"/>
    <property type="match status" value="1"/>
</dbReference>
<dbReference type="SUPFAM" id="SSF55681">
    <property type="entry name" value="Class II aaRS and biotin synthetases"/>
    <property type="match status" value="1"/>
</dbReference>
<dbReference type="SUPFAM" id="SSF81271">
    <property type="entry name" value="TGS-like"/>
    <property type="match status" value="1"/>
</dbReference>
<dbReference type="SUPFAM" id="SSF55186">
    <property type="entry name" value="ThrRS/AlaRS common domain"/>
    <property type="match status" value="1"/>
</dbReference>
<dbReference type="PROSITE" id="PS50862">
    <property type="entry name" value="AA_TRNA_LIGASE_II"/>
    <property type="match status" value="1"/>
</dbReference>
<dbReference type="PROSITE" id="PS51880">
    <property type="entry name" value="TGS"/>
    <property type="match status" value="1"/>
</dbReference>
<organism>
    <name type="scientific">Rickettsia typhi (strain ATCC VR-144 / Wilmington)</name>
    <dbReference type="NCBI Taxonomy" id="257363"/>
    <lineage>
        <taxon>Bacteria</taxon>
        <taxon>Pseudomonadati</taxon>
        <taxon>Pseudomonadota</taxon>
        <taxon>Alphaproteobacteria</taxon>
        <taxon>Rickettsiales</taxon>
        <taxon>Rickettsiaceae</taxon>
        <taxon>Rickettsieae</taxon>
        <taxon>Rickettsia</taxon>
        <taxon>typhus group</taxon>
    </lineage>
</organism>
<keyword id="KW-0030">Aminoacyl-tRNA synthetase</keyword>
<keyword id="KW-0067">ATP-binding</keyword>
<keyword id="KW-0963">Cytoplasm</keyword>
<keyword id="KW-0436">Ligase</keyword>
<keyword id="KW-0479">Metal-binding</keyword>
<keyword id="KW-0547">Nucleotide-binding</keyword>
<keyword id="KW-0648">Protein biosynthesis</keyword>
<keyword id="KW-0694">RNA-binding</keyword>
<keyword id="KW-0820">tRNA-binding</keyword>
<keyword id="KW-0862">Zinc</keyword>